<sequence>MLSLMVSRDQTNDRSDDKPARSNPTDCSVHTEPSDANNRTGVHSGRHPREAHSQVRDLDLQFDCGGHRVRANCLFPWLPWLNCGCSLHTAEQWELQVRSDAPDCPEPTGQLQLLQASESESHSEVKHTPWWRLCTKWHHKRRDLPRKPE</sequence>
<comment type="function">
    <text evidence="1">Plays a role in the release of virion progenies by disrupting the host plasma membrane.</text>
</comment>
<comment type="subcellular location">
    <subcellularLocation>
        <location evidence="4">Host membrane</location>
        <topology evidence="4">Single-pass membrane protein</topology>
    </subcellularLocation>
</comment>
<comment type="similarity">
    <text evidence="4">Belongs to the avibirnavirus/aquabirnavirus VP5 protein family.</text>
</comment>
<organismHost>
    <name type="scientific">Gallus gallus</name>
    <name type="common">Chicken</name>
    <dbReference type="NCBI Taxonomy" id="9031"/>
</organismHost>
<organismHost>
    <name type="scientific">Meleagris gallopavo</name>
    <name type="common">Wild turkey</name>
    <dbReference type="NCBI Taxonomy" id="9103"/>
</organismHost>
<reference key="1">
    <citation type="journal article" date="1996" name="Virus Res.">
        <title>Coding sequences of both genome segments of a European 'very virulent' infectious bursal disease virus.</title>
        <authorList>
            <person name="Brown M.D."/>
            <person name="Skinner M.A."/>
        </authorList>
    </citation>
    <scope>NUCLEOTIDE SEQUENCE [GENOMIC RNA]</scope>
</reference>
<reference key="2">
    <citation type="submission" date="2005-12" db="EMBL/GenBank/DDBJ databases">
        <title>Natural mutations in the coding sequence of genome segment A of an infectious bursal disease virus strain related to very virulent viruses result in loss of pathogenicity.</title>
        <authorList>
            <person name="Le Nouen C."/>
            <person name="Rivallan G."/>
            <person name="Toquin D."/>
            <person name="Morin Y."/>
            <person name="Eterradossi N."/>
        </authorList>
    </citation>
    <scope>NUCLEOTIDE SEQUENCE [GENOMIC RNA]</scope>
    <source>
        <strain>94432</strain>
    </source>
</reference>
<accession>Q82634</accession>
<keyword id="KW-1043">Host membrane</keyword>
<keyword id="KW-0472">Membrane</keyword>
<keyword id="KW-1185">Reference proteome</keyword>
<keyword id="KW-0812">Transmembrane</keyword>
<keyword id="KW-1133">Transmembrane helix</keyword>
<organism>
    <name type="scientific">Avian infectious bursal disease virus (isolate Chicken/UK/UK661/1989)</name>
    <name type="common">IBDV</name>
    <name type="synonym">Gumboro disease virus</name>
    <dbReference type="NCBI Taxonomy" id="644440"/>
    <lineage>
        <taxon>Viruses</taxon>
        <taxon>Riboviria</taxon>
        <taxon>Orthornavirae</taxon>
        <taxon>Birnaviridae</taxon>
        <taxon>Avibirnavirus</taxon>
        <taxon>Avibirnavirus gumboroense</taxon>
    </lineage>
</organism>
<proteinExistence type="inferred from homology"/>
<dbReference type="EMBL" id="X92760">
    <property type="protein sequence ID" value="CAA63415.1"/>
    <property type="molecule type" value="Genomic_RNA"/>
</dbReference>
<dbReference type="EMBL" id="AM167550">
    <property type="protein sequence ID" value="CAJ44474.1"/>
    <property type="molecule type" value="Genomic_RNA"/>
</dbReference>
<dbReference type="RefSeq" id="NP_690837.1">
    <property type="nucleotide sequence ID" value="NC_004178.1"/>
</dbReference>
<dbReference type="KEGG" id="vg:956508"/>
<dbReference type="Proteomes" id="UP000007249">
    <property type="component" value="Genome"/>
</dbReference>
<dbReference type="GO" id="GO:0033644">
    <property type="term" value="C:host cell membrane"/>
    <property type="evidence" value="ECO:0007669"/>
    <property type="project" value="UniProtKB-SubCell"/>
</dbReference>
<dbReference type="GO" id="GO:0016020">
    <property type="term" value="C:membrane"/>
    <property type="evidence" value="ECO:0007669"/>
    <property type="project" value="UniProtKB-KW"/>
</dbReference>
<dbReference type="InterPro" id="IPR004284">
    <property type="entry name" value="Birna_VP5"/>
</dbReference>
<dbReference type="Pfam" id="PF03042">
    <property type="entry name" value="Birna_VP5"/>
    <property type="match status" value="1"/>
</dbReference>
<gene>
    <name type="primary">VP5</name>
</gene>
<evidence type="ECO:0000250" key="1"/>
<evidence type="ECO:0000255" key="2"/>
<evidence type="ECO:0000256" key="3">
    <source>
        <dbReference type="SAM" id="MobiDB-lite"/>
    </source>
</evidence>
<evidence type="ECO:0000305" key="4"/>
<name>VP5_IBDVU</name>
<protein>
    <recommendedName>
        <fullName>Protein VP5</fullName>
    </recommendedName>
</protein>
<feature type="chain" id="PRO_0000378413" description="Protein VP5">
    <location>
        <begin position="1"/>
        <end position="149"/>
    </location>
</feature>
<feature type="topological domain" description="Cytoplasmic" evidence="2">
    <location>
        <begin position="1"/>
        <end position="72"/>
    </location>
</feature>
<feature type="transmembrane region" description="Helical" evidence="2">
    <location>
        <begin position="73"/>
        <end position="90"/>
    </location>
</feature>
<feature type="topological domain" description="Extracellular" evidence="2">
    <location>
        <begin position="91"/>
        <end position="149"/>
    </location>
</feature>
<feature type="region of interest" description="Disordered" evidence="3">
    <location>
        <begin position="1"/>
        <end position="54"/>
    </location>
</feature>
<feature type="compositionally biased region" description="Basic and acidic residues" evidence="3">
    <location>
        <begin position="10"/>
        <end position="20"/>
    </location>
</feature>